<comment type="function">
    <text evidence="2">Involved in L-serine biosynthesis via the phosphorylated pathway, a three-step pathway converting the glycolytic intermediate 3-phospho-D-glycerate into L-serine. Catalyzes the second step, that is the pyridoxal 5'-phosphate-dependent transamination of 3-phosphohydroxypyruvate and L-glutamate to O-phosphoserine (OPS) and alpha-ketoglutarate.</text>
</comment>
<comment type="catalytic activity">
    <reaction evidence="2">
        <text>O-phospho-L-serine + 2-oxoglutarate = 3-phosphooxypyruvate + L-glutamate</text>
        <dbReference type="Rhea" id="RHEA:14329"/>
        <dbReference type="ChEBI" id="CHEBI:16810"/>
        <dbReference type="ChEBI" id="CHEBI:18110"/>
        <dbReference type="ChEBI" id="CHEBI:29985"/>
        <dbReference type="ChEBI" id="CHEBI:57524"/>
        <dbReference type="EC" id="2.6.1.52"/>
    </reaction>
</comment>
<comment type="cofactor">
    <cofactor evidence="2">
        <name>pyridoxal 5'-phosphate</name>
        <dbReference type="ChEBI" id="CHEBI:597326"/>
    </cofactor>
    <text evidence="2">Binds 2 pyridoxal phosphate molecules per dimer, each cofactor is bound at the monomer-monomer interface and forms contacts with residues from both chains.</text>
</comment>
<comment type="pathway">
    <text evidence="2">Amino-acid biosynthesis; L-serine biosynthesis; L-serine from 3-phospho-D-glycerate: step 2/3.</text>
</comment>
<comment type="subunit">
    <text evidence="2">Homodimer.</text>
</comment>
<comment type="induction">
    <text>By progesterone.</text>
</comment>
<comment type="similarity">
    <text evidence="3">Belongs to the class-V pyridoxal-phosphate-dependent aminotransferase family. SerC subfamily.</text>
</comment>
<organism>
    <name type="scientific">Oryctolagus cuniculus</name>
    <name type="common">Rabbit</name>
    <dbReference type="NCBI Taxonomy" id="9986"/>
    <lineage>
        <taxon>Eukaryota</taxon>
        <taxon>Metazoa</taxon>
        <taxon>Chordata</taxon>
        <taxon>Craniata</taxon>
        <taxon>Vertebrata</taxon>
        <taxon>Euteleostomi</taxon>
        <taxon>Mammalia</taxon>
        <taxon>Eutheria</taxon>
        <taxon>Euarchontoglires</taxon>
        <taxon>Glires</taxon>
        <taxon>Lagomorpha</taxon>
        <taxon>Leporidae</taxon>
        <taxon>Oryctolagus</taxon>
    </lineage>
</organism>
<feature type="chain" id="PRO_0000150137" description="Phosphoserine aminotransferase">
    <location>
        <begin position="1"/>
        <end position="370"/>
    </location>
</feature>
<feature type="binding site" description="in other chain" evidence="2">
    <location>
        <position position="44"/>
    </location>
    <ligand>
        <name>O-phospho-L-serine</name>
        <dbReference type="ChEBI" id="CHEBI:57524"/>
        <note>ligand shared between homodimeric partners</note>
    </ligand>
</feature>
<feature type="binding site" description="in other chain" evidence="2">
    <location>
        <position position="45"/>
    </location>
    <ligand>
        <name>O-phospho-L-serine</name>
        <dbReference type="ChEBI" id="CHEBI:57524"/>
        <note>ligand shared between homodimeric partners</note>
    </ligand>
</feature>
<feature type="binding site" evidence="2">
    <location>
        <position position="79"/>
    </location>
    <ligand>
        <name>pyridoxal 5'-phosphate</name>
        <dbReference type="ChEBI" id="CHEBI:597326"/>
        <note>ligand shared between homodimeric partners</note>
    </ligand>
</feature>
<feature type="binding site" evidence="2">
    <location>
        <position position="80"/>
    </location>
    <ligand>
        <name>pyridoxal 5'-phosphate</name>
        <dbReference type="ChEBI" id="CHEBI:597326"/>
        <note>ligand shared between homodimeric partners</note>
    </ligand>
</feature>
<feature type="binding site" evidence="2">
    <location>
        <position position="107"/>
    </location>
    <ligand>
        <name>pyridoxal 5'-phosphate</name>
        <dbReference type="ChEBI" id="CHEBI:597326"/>
        <note>ligand shared between homodimeric partners</note>
    </ligand>
</feature>
<feature type="binding site" evidence="2">
    <location>
        <position position="156"/>
    </location>
    <ligand>
        <name>pyridoxal 5'-phosphate</name>
        <dbReference type="ChEBI" id="CHEBI:597326"/>
        <note>ligand shared between homodimeric partners</note>
    </ligand>
</feature>
<feature type="binding site" evidence="2">
    <location>
        <position position="176"/>
    </location>
    <ligand>
        <name>pyridoxal 5'-phosphate</name>
        <dbReference type="ChEBI" id="CHEBI:597326"/>
        <note>ligand shared between homodimeric partners</note>
    </ligand>
</feature>
<feature type="binding site" evidence="2">
    <location>
        <position position="199"/>
    </location>
    <ligand>
        <name>pyridoxal 5'-phosphate</name>
        <dbReference type="ChEBI" id="CHEBI:597326"/>
        <note>ligand shared between homodimeric partners</note>
    </ligand>
</feature>
<feature type="binding site" description="in other chain" evidence="2">
    <location>
        <position position="241"/>
    </location>
    <ligand>
        <name>pyridoxal 5'-phosphate</name>
        <dbReference type="ChEBI" id="CHEBI:597326"/>
        <note>ligand shared between homodimeric partners</note>
    </ligand>
</feature>
<feature type="binding site" description="in other chain" evidence="2">
    <location>
        <position position="242"/>
    </location>
    <ligand>
        <name>pyridoxal 5'-phosphate</name>
        <dbReference type="ChEBI" id="CHEBI:597326"/>
        <note>ligand shared between homodimeric partners</note>
    </ligand>
</feature>
<feature type="binding site" evidence="2">
    <location>
        <position position="335"/>
    </location>
    <ligand>
        <name>O-phospho-L-serine</name>
        <dbReference type="ChEBI" id="CHEBI:57524"/>
        <note>ligand shared between homodimeric partners</note>
    </ligand>
</feature>
<feature type="binding site" evidence="2">
    <location>
        <position position="336"/>
    </location>
    <ligand>
        <name>O-phospho-L-serine</name>
        <dbReference type="ChEBI" id="CHEBI:57524"/>
        <note>ligand shared between homodimeric partners</note>
    </ligand>
</feature>
<feature type="binding site" evidence="2">
    <location>
        <position position="342"/>
    </location>
    <ligand>
        <name>O-phospho-L-serine</name>
        <dbReference type="ChEBI" id="CHEBI:57524"/>
        <note>ligand shared between homodimeric partners</note>
    </ligand>
</feature>
<feature type="modified residue" description="N-acetylmethionine" evidence="2">
    <location>
        <position position="1"/>
    </location>
</feature>
<feature type="modified residue" description="N6-acetyllysine" evidence="2">
    <location>
        <position position="51"/>
    </location>
</feature>
<feature type="modified residue" description="N6-acetyllysine" evidence="1">
    <location>
        <position position="127"/>
    </location>
</feature>
<feature type="modified residue" description="N6-(pyridoxal phosphate)lysine" evidence="2">
    <location>
        <position position="200"/>
    </location>
</feature>
<feature type="modified residue" description="N6-acetyllysine" evidence="2">
    <location>
        <position position="269"/>
    </location>
</feature>
<feature type="modified residue" description="N6-acetyllysine" evidence="2">
    <location>
        <position position="318"/>
    </location>
</feature>
<feature type="modified residue" description="N6-acetyllysine" evidence="2">
    <location>
        <position position="323"/>
    </location>
</feature>
<feature type="modified residue" description="Phosphoserine" evidence="2">
    <location>
        <position position="331"/>
    </location>
</feature>
<feature type="modified residue" description="N6-acetyllysine" evidence="2">
    <location>
        <position position="333"/>
    </location>
</feature>
<evidence type="ECO:0000250" key="1">
    <source>
        <dbReference type="UniProtKB" id="Q99K85"/>
    </source>
</evidence>
<evidence type="ECO:0000250" key="2">
    <source>
        <dbReference type="UniProtKB" id="Q9Y617"/>
    </source>
</evidence>
<evidence type="ECO:0000305" key="3"/>
<gene>
    <name type="primary">PSAT1</name>
    <name type="synonym">PSA</name>
</gene>
<protein>
    <recommendedName>
        <fullName evidence="3">Phosphoserine aminotransferase</fullName>
        <shortName>PSAT</shortName>
        <ecNumber evidence="2">2.6.1.52</ecNumber>
    </recommendedName>
    <alternativeName>
        <fullName>Endometrial progesterone-induced protein</fullName>
        <shortName>EPIP</shortName>
    </alternativeName>
    <alternativeName>
        <fullName>Phosphohydroxythreonine aminotransferase</fullName>
    </alternativeName>
</protein>
<reference key="1">
    <citation type="journal article" date="1987" name="Biochemistry">
        <title>A novel progesterone-induced messenger RNA in rabbit and human endometria. Cloning and sequence analysis of the complementary DNA.</title>
        <authorList>
            <person name="Misrahi M."/>
            <person name="Atger M."/>
            <person name="Milgrom E."/>
        </authorList>
    </citation>
    <scope>NUCLEOTIDE SEQUENCE [MRNA]</scope>
</reference>
<keyword id="KW-0007">Acetylation</keyword>
<keyword id="KW-0028">Amino-acid biosynthesis</keyword>
<keyword id="KW-0032">Aminotransferase</keyword>
<keyword id="KW-0597">Phosphoprotein</keyword>
<keyword id="KW-0663">Pyridoxal phosphate</keyword>
<keyword id="KW-1185">Reference proteome</keyword>
<keyword id="KW-0718">Serine biosynthesis</keyword>
<keyword id="KW-0808">Transferase</keyword>
<accession>P10658</accession>
<sequence length="370" mass="40621">MDSPRQIVNFGPGPAKLPHSVLLEIQKELLDYKGLGISVLEMSHRSSDFAKIVNNTENLVRELLAVPDNYKVIFLQGGGCGQFSAVPLNLIGLKPGRCADYVVTGAWSAKAAEEAKKFGTVNIVHPKLGSYTKIPDPSTWNLNPDASYVYYCANETVHGVEFDFVPDVKGAILVCDMSSNFLSRPVDVSKFGVIFAGAQKNVGAAGVTVVIVRDDLLGFALRECPSVLEYKVQATSSSLYNTPPCFSIYVMGLVLEWIKNNGGAAAMKKLSTIKSQMIYEIIDNSQGFYVCPVEPRNRSMMNIPFRIGNAKGDEALEKRFLDKALELHMISLKGHRSVGGVRVSLYNAVTIEDVQKLASFMKNFLEMHQL</sequence>
<name>SERC_RABIT</name>
<dbReference type="EC" id="2.6.1.52" evidence="2"/>
<dbReference type="EMBL" id="M17099">
    <property type="protein sequence ID" value="AAA31245.1"/>
    <property type="molecule type" value="mRNA"/>
</dbReference>
<dbReference type="PIR" id="A26998">
    <property type="entry name" value="A26998"/>
</dbReference>
<dbReference type="RefSeq" id="NP_001075740.1">
    <property type="nucleotide sequence ID" value="NM_001082271.1"/>
</dbReference>
<dbReference type="SMR" id="P10658"/>
<dbReference type="FunCoup" id="P10658">
    <property type="interactions" value="647"/>
</dbReference>
<dbReference type="STRING" id="9986.ENSOCUP00000006706"/>
<dbReference type="PaxDb" id="9986-ENSOCUP00000006706"/>
<dbReference type="GeneID" id="100009099"/>
<dbReference type="KEGG" id="ocu:100009099"/>
<dbReference type="CTD" id="29968"/>
<dbReference type="eggNOG" id="KOG2790">
    <property type="taxonomic scope" value="Eukaryota"/>
</dbReference>
<dbReference type="InParanoid" id="P10658"/>
<dbReference type="OrthoDB" id="1703350at2759"/>
<dbReference type="UniPathway" id="UPA00135">
    <property type="reaction ID" value="UER00197"/>
</dbReference>
<dbReference type="Proteomes" id="UP000001811">
    <property type="component" value="Unplaced"/>
</dbReference>
<dbReference type="GO" id="GO:0005737">
    <property type="term" value="C:cytoplasm"/>
    <property type="evidence" value="ECO:0007669"/>
    <property type="project" value="TreeGrafter"/>
</dbReference>
<dbReference type="GO" id="GO:0004648">
    <property type="term" value="F:O-phospho-L-serine:2-oxoglutarate aminotransferase activity"/>
    <property type="evidence" value="ECO:0000250"/>
    <property type="project" value="UniProtKB"/>
</dbReference>
<dbReference type="GO" id="GO:0030170">
    <property type="term" value="F:pyridoxal phosphate binding"/>
    <property type="evidence" value="ECO:0007669"/>
    <property type="project" value="TreeGrafter"/>
</dbReference>
<dbReference type="GO" id="GO:0006564">
    <property type="term" value="P:L-serine biosynthetic process"/>
    <property type="evidence" value="ECO:0000250"/>
    <property type="project" value="UniProtKB"/>
</dbReference>
<dbReference type="CDD" id="cd00611">
    <property type="entry name" value="PSAT_like"/>
    <property type="match status" value="1"/>
</dbReference>
<dbReference type="FunFam" id="3.40.640.10:FF:000010">
    <property type="entry name" value="Phosphoserine aminotransferase"/>
    <property type="match status" value="1"/>
</dbReference>
<dbReference type="FunFam" id="3.90.1150.10:FF:000121">
    <property type="entry name" value="Phosphoserine aminotransferase"/>
    <property type="match status" value="1"/>
</dbReference>
<dbReference type="Gene3D" id="3.90.1150.10">
    <property type="entry name" value="Aspartate Aminotransferase, domain 1"/>
    <property type="match status" value="1"/>
</dbReference>
<dbReference type="Gene3D" id="3.40.640.10">
    <property type="entry name" value="Type I PLP-dependent aspartate aminotransferase-like (Major domain)"/>
    <property type="match status" value="1"/>
</dbReference>
<dbReference type="HAMAP" id="MF_00160">
    <property type="entry name" value="SerC_aminotrans_5"/>
    <property type="match status" value="1"/>
</dbReference>
<dbReference type="InterPro" id="IPR000192">
    <property type="entry name" value="Aminotrans_V_dom"/>
</dbReference>
<dbReference type="InterPro" id="IPR020578">
    <property type="entry name" value="Aminotrans_V_PyrdxlP_BS"/>
</dbReference>
<dbReference type="InterPro" id="IPR022278">
    <property type="entry name" value="Pser_aminoTfrase"/>
</dbReference>
<dbReference type="InterPro" id="IPR015424">
    <property type="entry name" value="PyrdxlP-dep_Trfase"/>
</dbReference>
<dbReference type="InterPro" id="IPR015421">
    <property type="entry name" value="PyrdxlP-dep_Trfase_major"/>
</dbReference>
<dbReference type="InterPro" id="IPR015422">
    <property type="entry name" value="PyrdxlP-dep_Trfase_small"/>
</dbReference>
<dbReference type="NCBIfam" id="NF003764">
    <property type="entry name" value="PRK05355.1"/>
    <property type="match status" value="1"/>
</dbReference>
<dbReference type="NCBIfam" id="TIGR01364">
    <property type="entry name" value="serC_1"/>
    <property type="match status" value="1"/>
</dbReference>
<dbReference type="PANTHER" id="PTHR43247">
    <property type="entry name" value="PHOSPHOSERINE AMINOTRANSFERASE"/>
    <property type="match status" value="1"/>
</dbReference>
<dbReference type="PANTHER" id="PTHR43247:SF1">
    <property type="entry name" value="PHOSPHOSERINE AMINOTRANSFERASE"/>
    <property type="match status" value="1"/>
</dbReference>
<dbReference type="Pfam" id="PF00266">
    <property type="entry name" value="Aminotran_5"/>
    <property type="match status" value="1"/>
</dbReference>
<dbReference type="PIRSF" id="PIRSF000525">
    <property type="entry name" value="SerC"/>
    <property type="match status" value="1"/>
</dbReference>
<dbReference type="SUPFAM" id="SSF53383">
    <property type="entry name" value="PLP-dependent transferases"/>
    <property type="match status" value="1"/>
</dbReference>
<dbReference type="PROSITE" id="PS00595">
    <property type="entry name" value="AA_TRANSFER_CLASS_5"/>
    <property type="match status" value="1"/>
</dbReference>
<proteinExistence type="evidence at transcript level"/>